<reference key="1">
    <citation type="journal article" date="2004" name="Mol. Biol. Evol.">
        <title>The chloroplast genome of Nymphaea alba: whole-genome analyses and the problem of identifying the most basal angiosperm.</title>
        <authorList>
            <person name="Goremykin V.V."/>
            <person name="Hirsch-Ernst K.I."/>
            <person name="Woelfl S."/>
            <person name="Hellwig F.H."/>
        </authorList>
    </citation>
    <scope>NUCLEOTIDE SEQUENCE [LARGE SCALE GENOMIC DNA]</scope>
</reference>
<evidence type="ECO:0000255" key="1">
    <source>
        <dbReference type="HAMAP-Rule" id="MF_00439"/>
    </source>
</evidence>
<feature type="chain" id="PRO_0000217811" description="Photosystem I assembly protein Ycf3">
    <location>
        <begin position="1"/>
        <end position="168"/>
    </location>
</feature>
<feature type="repeat" description="TPR 1">
    <location>
        <begin position="35"/>
        <end position="68"/>
    </location>
</feature>
<feature type="repeat" description="TPR 2">
    <location>
        <begin position="72"/>
        <end position="105"/>
    </location>
</feature>
<feature type="repeat" description="TPR 3">
    <location>
        <begin position="120"/>
        <end position="153"/>
    </location>
</feature>
<name>YCF3_NYMAL</name>
<comment type="function">
    <text evidence="1">Essential for the assembly of the photosystem I (PSI) complex. May act as a chaperone-like factor to guide the assembly of the PSI subunits.</text>
</comment>
<comment type="subcellular location">
    <subcellularLocation>
        <location evidence="1">Plastid</location>
        <location evidence="1">Chloroplast thylakoid membrane</location>
        <topology evidence="1">Peripheral membrane protein</topology>
    </subcellularLocation>
</comment>
<comment type="similarity">
    <text evidence="1">Belongs to the Ycf3 family.</text>
</comment>
<keyword id="KW-0150">Chloroplast</keyword>
<keyword id="KW-0472">Membrane</keyword>
<keyword id="KW-0602">Photosynthesis</keyword>
<keyword id="KW-0934">Plastid</keyword>
<keyword id="KW-0677">Repeat</keyword>
<keyword id="KW-0793">Thylakoid</keyword>
<keyword id="KW-0802">TPR repeat</keyword>
<gene>
    <name evidence="1" type="primary">ycf3</name>
</gene>
<accession>Q6EW47</accession>
<proteinExistence type="inferred from homology"/>
<sequence>MPRSRINGNFIDKTSSIVANILLRIIPTTSGEKEAFTYYRDGMSAQSEGNYAEALQNYYEAMRPEIDPYDRSYILYNIGLIHTSNGEHTKALEYYFRALERNPFLPQASNNMAVICHYRGEEAIRQGDSEIAEAWFDQAAEYWKQAIALTPGNYIEAQNWLKITGRFE</sequence>
<dbReference type="EMBL" id="AJ627251">
    <property type="protein sequence ID" value="CAF28594.1"/>
    <property type="molecule type" value="Genomic_DNA"/>
</dbReference>
<dbReference type="RefSeq" id="YP_053156.1">
    <property type="nucleotide sequence ID" value="NC_006050.1"/>
</dbReference>
<dbReference type="SMR" id="Q6EW47"/>
<dbReference type="GeneID" id="2896249"/>
<dbReference type="GO" id="GO:0009535">
    <property type="term" value="C:chloroplast thylakoid membrane"/>
    <property type="evidence" value="ECO:0007669"/>
    <property type="project" value="UniProtKB-SubCell"/>
</dbReference>
<dbReference type="GO" id="GO:0015979">
    <property type="term" value="P:photosynthesis"/>
    <property type="evidence" value="ECO:0007669"/>
    <property type="project" value="UniProtKB-UniRule"/>
</dbReference>
<dbReference type="FunFam" id="1.25.40.10:FF:000004">
    <property type="entry name" value="Photosystem I assembly protein Ycf3"/>
    <property type="match status" value="1"/>
</dbReference>
<dbReference type="Gene3D" id="1.25.40.10">
    <property type="entry name" value="Tetratricopeptide repeat domain"/>
    <property type="match status" value="1"/>
</dbReference>
<dbReference type="HAMAP" id="MF_00439">
    <property type="entry name" value="Ycf3"/>
    <property type="match status" value="1"/>
</dbReference>
<dbReference type="InterPro" id="IPR022818">
    <property type="entry name" value="PSI_Ycf3_assembly"/>
</dbReference>
<dbReference type="InterPro" id="IPR011990">
    <property type="entry name" value="TPR-like_helical_dom_sf"/>
</dbReference>
<dbReference type="InterPro" id="IPR019734">
    <property type="entry name" value="TPR_rpt"/>
</dbReference>
<dbReference type="InterPro" id="IPR051685">
    <property type="entry name" value="Ycf3/AcsC/BcsC/TPR_MFPF"/>
</dbReference>
<dbReference type="NCBIfam" id="NF002725">
    <property type="entry name" value="PRK02603.1"/>
    <property type="match status" value="1"/>
</dbReference>
<dbReference type="PANTHER" id="PTHR44943">
    <property type="entry name" value="CELLULOSE SYNTHASE OPERON PROTEIN C"/>
    <property type="match status" value="1"/>
</dbReference>
<dbReference type="PANTHER" id="PTHR44943:SF8">
    <property type="entry name" value="TPR REPEAT-CONTAINING PROTEIN MJ0263"/>
    <property type="match status" value="1"/>
</dbReference>
<dbReference type="Pfam" id="PF00515">
    <property type="entry name" value="TPR_1"/>
    <property type="match status" value="1"/>
</dbReference>
<dbReference type="SMART" id="SM00028">
    <property type="entry name" value="TPR"/>
    <property type="match status" value="3"/>
</dbReference>
<dbReference type="SUPFAM" id="SSF48452">
    <property type="entry name" value="TPR-like"/>
    <property type="match status" value="1"/>
</dbReference>
<dbReference type="PROSITE" id="PS50005">
    <property type="entry name" value="TPR"/>
    <property type="match status" value="3"/>
</dbReference>
<dbReference type="PROSITE" id="PS50293">
    <property type="entry name" value="TPR_REGION"/>
    <property type="match status" value="2"/>
</dbReference>
<geneLocation type="chloroplast"/>
<organism>
    <name type="scientific">Nymphaea alba</name>
    <name type="common">White water-lily</name>
    <name type="synonym">Castalia alba</name>
    <dbReference type="NCBI Taxonomy" id="34301"/>
    <lineage>
        <taxon>Eukaryota</taxon>
        <taxon>Viridiplantae</taxon>
        <taxon>Streptophyta</taxon>
        <taxon>Embryophyta</taxon>
        <taxon>Tracheophyta</taxon>
        <taxon>Spermatophyta</taxon>
        <taxon>Magnoliopsida</taxon>
        <taxon>Nymphaeales</taxon>
        <taxon>Nymphaeaceae</taxon>
        <taxon>Nymphaea</taxon>
    </lineage>
</organism>
<protein>
    <recommendedName>
        <fullName evidence="1">Photosystem I assembly protein Ycf3</fullName>
    </recommendedName>
</protein>